<organism>
    <name type="scientific">Rickettsia bellii (strain OSU 85-389)</name>
    <dbReference type="NCBI Taxonomy" id="391896"/>
    <lineage>
        <taxon>Bacteria</taxon>
        <taxon>Pseudomonadati</taxon>
        <taxon>Pseudomonadota</taxon>
        <taxon>Alphaproteobacteria</taxon>
        <taxon>Rickettsiales</taxon>
        <taxon>Rickettsiaceae</taxon>
        <taxon>Rickettsieae</taxon>
        <taxon>Rickettsia</taxon>
        <taxon>belli group</taxon>
    </lineage>
</organism>
<reference key="1">
    <citation type="submission" date="2007-09" db="EMBL/GenBank/DDBJ databases">
        <title>Complete genome sequencing of Rickettsia bellii.</title>
        <authorList>
            <person name="Madan A."/>
            <person name="Lee H."/>
            <person name="Madan A."/>
            <person name="Yoon J.-G."/>
            <person name="Ryu G.-Y."/>
            <person name="Dasch G."/>
            <person name="Ereemeva M."/>
        </authorList>
    </citation>
    <scope>NUCLEOTIDE SEQUENCE [LARGE SCALE GENOMIC DNA]</scope>
    <source>
        <strain>OSU 85-389</strain>
    </source>
</reference>
<gene>
    <name evidence="1" type="primary">rpsT</name>
    <name type="ordered locus">A1I_02170</name>
</gene>
<proteinExistence type="inferred from homology"/>
<feature type="chain" id="PRO_1000014642" description="Small ribosomal subunit protein bS20">
    <location>
        <begin position="1"/>
        <end position="87"/>
    </location>
</feature>
<name>RS20_RICB8</name>
<keyword id="KW-0687">Ribonucleoprotein</keyword>
<keyword id="KW-0689">Ribosomal protein</keyword>
<keyword id="KW-0694">RNA-binding</keyword>
<keyword id="KW-0699">rRNA-binding</keyword>
<accession>A8GVD9</accession>
<evidence type="ECO:0000255" key="1">
    <source>
        <dbReference type="HAMAP-Rule" id="MF_00500"/>
    </source>
</evidence>
<evidence type="ECO:0000305" key="2"/>
<comment type="function">
    <text evidence="1">Binds directly to 16S ribosomal RNA.</text>
</comment>
<comment type="similarity">
    <text evidence="1">Belongs to the bacterial ribosomal protein bS20 family.</text>
</comment>
<protein>
    <recommendedName>
        <fullName evidence="1">Small ribosomal subunit protein bS20</fullName>
    </recommendedName>
    <alternativeName>
        <fullName evidence="2">30S ribosomal protein S20</fullName>
    </alternativeName>
</protein>
<dbReference type="EMBL" id="CP000849">
    <property type="protein sequence ID" value="ABV78816.1"/>
    <property type="molecule type" value="Genomic_DNA"/>
</dbReference>
<dbReference type="RefSeq" id="WP_011477695.1">
    <property type="nucleotide sequence ID" value="NC_009883.1"/>
</dbReference>
<dbReference type="SMR" id="A8GVD9"/>
<dbReference type="KEGG" id="rbo:A1I_02170"/>
<dbReference type="HOGENOM" id="CLU_160655_3_0_5"/>
<dbReference type="GO" id="GO:0015935">
    <property type="term" value="C:small ribosomal subunit"/>
    <property type="evidence" value="ECO:0007669"/>
    <property type="project" value="TreeGrafter"/>
</dbReference>
<dbReference type="GO" id="GO:0070181">
    <property type="term" value="F:small ribosomal subunit rRNA binding"/>
    <property type="evidence" value="ECO:0007669"/>
    <property type="project" value="TreeGrafter"/>
</dbReference>
<dbReference type="GO" id="GO:0003735">
    <property type="term" value="F:structural constituent of ribosome"/>
    <property type="evidence" value="ECO:0007669"/>
    <property type="project" value="InterPro"/>
</dbReference>
<dbReference type="GO" id="GO:0006412">
    <property type="term" value="P:translation"/>
    <property type="evidence" value="ECO:0007669"/>
    <property type="project" value="UniProtKB-UniRule"/>
</dbReference>
<dbReference type="Gene3D" id="1.20.58.110">
    <property type="entry name" value="Ribosomal protein S20"/>
    <property type="match status" value="1"/>
</dbReference>
<dbReference type="HAMAP" id="MF_00500">
    <property type="entry name" value="Ribosomal_bS20"/>
    <property type="match status" value="1"/>
</dbReference>
<dbReference type="InterPro" id="IPR002583">
    <property type="entry name" value="Ribosomal_bS20"/>
</dbReference>
<dbReference type="InterPro" id="IPR036510">
    <property type="entry name" value="Ribosomal_bS20_sf"/>
</dbReference>
<dbReference type="NCBIfam" id="TIGR00029">
    <property type="entry name" value="S20"/>
    <property type="match status" value="1"/>
</dbReference>
<dbReference type="PANTHER" id="PTHR33398">
    <property type="entry name" value="30S RIBOSOMAL PROTEIN S20"/>
    <property type="match status" value="1"/>
</dbReference>
<dbReference type="PANTHER" id="PTHR33398:SF1">
    <property type="entry name" value="SMALL RIBOSOMAL SUBUNIT PROTEIN BS20C"/>
    <property type="match status" value="1"/>
</dbReference>
<dbReference type="Pfam" id="PF01649">
    <property type="entry name" value="Ribosomal_S20p"/>
    <property type="match status" value="1"/>
</dbReference>
<dbReference type="SUPFAM" id="SSF46992">
    <property type="entry name" value="Ribosomal protein S20"/>
    <property type="match status" value="1"/>
</dbReference>
<sequence length="87" mass="9671">MANHSSAKKAARQTVKKTLVNKRRASAIKTFVKKVLHEINQGNKEEANSALVIAQSKIMQGVKKNIIKLNTASRKISKLSKKIKTMN</sequence>